<protein>
    <recommendedName>
        <fullName evidence="1">Dipeptide and tripeptide permease B</fullName>
    </recommendedName>
</protein>
<sequence length="489" mass="53599">MNTTAPTGLLQQPRPFFMIFFVELWERFGYYGVQGILAVFFVKQLGFSQEQAFITFGAFAALVYGLISIGGYVGDHLLGTKRTLVLGAIVLAIGYFMTGMSLLNPDLIFIALGTIAVGNGLFKANPASLLSKCYQPKDPRLDGAFTLFYMSINIGSLLSLSLAPVIADKFGYAVTYNLCGAGLIVALLVYFACRGMVKNIGSEPDHKPLRFRNLLLVLLGTVVMIFLCAWLMHNVKIANLVLIVLSIVVTIFFFREAFRLDKTGRNKMFVAFILMIEAVLFYILYAQMPTSLNFFAINNVHHEILGFAINPVSFQALNPFWVVVASPVLAAIYTRLGSKGKDLTMPMKFTLGMFLCALGFLTAAAGMWFADAQGLTSPWFIVLVYLFQSLGELLISALGLAMVAALVPQHLMGFILGMWFLTQAAAFLLGGYVATFTAVPENITDPLQTLPIYTGVFSKIGLVTLAVTVVMAIMVPWLNRMINTPGTEQ</sequence>
<feature type="chain" id="PRO_0000395187" description="Dipeptide and tripeptide permease B">
    <location>
        <begin position="1"/>
        <end position="489"/>
    </location>
</feature>
<feature type="topological domain" description="Cytoplasmic" evidence="1">
    <location>
        <begin position="1"/>
        <end position="27"/>
    </location>
</feature>
<feature type="transmembrane region" description="Helical" evidence="1">
    <location>
        <begin position="28"/>
        <end position="48"/>
    </location>
</feature>
<feature type="topological domain" description="Periplasmic" evidence="1">
    <location>
        <begin position="49"/>
        <end position="52"/>
    </location>
</feature>
<feature type="transmembrane region" description="Helical" evidence="1">
    <location>
        <begin position="53"/>
        <end position="73"/>
    </location>
</feature>
<feature type="topological domain" description="Cytoplasmic" evidence="1">
    <location>
        <begin position="74"/>
        <end position="82"/>
    </location>
</feature>
<feature type="transmembrane region" description="Helical" evidence="1">
    <location>
        <begin position="83"/>
        <end position="103"/>
    </location>
</feature>
<feature type="topological domain" description="Periplasmic" evidence="1">
    <location>
        <begin position="104"/>
        <end position="106"/>
    </location>
</feature>
<feature type="transmembrane region" description="Helical" evidence="1">
    <location>
        <begin position="107"/>
        <end position="127"/>
    </location>
</feature>
<feature type="topological domain" description="Cytoplasmic" evidence="1">
    <location>
        <begin position="128"/>
        <end position="146"/>
    </location>
</feature>
<feature type="transmembrane region" description="Helical" evidence="1">
    <location>
        <begin position="147"/>
        <end position="167"/>
    </location>
</feature>
<feature type="topological domain" description="Periplasmic" evidence="1">
    <location>
        <begin position="168"/>
        <end position="172"/>
    </location>
</feature>
<feature type="transmembrane region" description="Helical" evidence="1">
    <location>
        <begin position="173"/>
        <end position="193"/>
    </location>
</feature>
<feature type="topological domain" description="Cytoplasmic" evidence="1">
    <location>
        <begin position="194"/>
        <end position="214"/>
    </location>
</feature>
<feature type="transmembrane region" description="Helical" evidence="1">
    <location>
        <begin position="215"/>
        <end position="235"/>
    </location>
</feature>
<feature type="topological domain" description="Periplasmic" evidence="1">
    <location>
        <position position="236"/>
    </location>
</feature>
<feature type="transmembrane region" description="Helical" evidence="1">
    <location>
        <begin position="237"/>
        <end position="257"/>
    </location>
</feature>
<feature type="topological domain" description="Cytoplasmic" evidence="1">
    <location>
        <begin position="258"/>
        <end position="267"/>
    </location>
</feature>
<feature type="transmembrane region" description="Helical" evidence="1">
    <location>
        <begin position="268"/>
        <end position="288"/>
    </location>
</feature>
<feature type="topological domain" description="Periplasmic" evidence="1">
    <location>
        <begin position="289"/>
        <end position="315"/>
    </location>
</feature>
<feature type="transmembrane region" description="Helical" evidence="1">
    <location>
        <begin position="316"/>
        <end position="338"/>
    </location>
</feature>
<feature type="topological domain" description="Cytoplasmic" evidence="1">
    <location>
        <begin position="339"/>
        <end position="348"/>
    </location>
</feature>
<feature type="transmembrane region" description="Helical" evidence="1">
    <location>
        <begin position="349"/>
        <end position="369"/>
    </location>
</feature>
<feature type="topological domain" description="Periplasmic" evidence="1">
    <location>
        <begin position="370"/>
        <end position="379"/>
    </location>
</feature>
<feature type="transmembrane region" description="Helical" evidence="1">
    <location>
        <begin position="380"/>
        <end position="400"/>
    </location>
</feature>
<feature type="topological domain" description="Cytoplasmic" evidence="1">
    <location>
        <begin position="401"/>
        <end position="410"/>
    </location>
</feature>
<feature type="transmembrane region" description="Helical" evidence="1">
    <location>
        <begin position="411"/>
        <end position="431"/>
    </location>
</feature>
<feature type="topological domain" description="Periplasmic" evidence="1">
    <location>
        <begin position="432"/>
        <end position="454"/>
    </location>
</feature>
<feature type="transmembrane region" description="Helical" evidence="1">
    <location>
        <begin position="455"/>
        <end position="475"/>
    </location>
</feature>
<feature type="topological domain" description="Cytoplasmic" evidence="1">
    <location>
        <begin position="476"/>
        <end position="489"/>
    </location>
</feature>
<proteinExistence type="inferred from homology"/>
<name>DTPB_SALTY</name>
<accession>Q8ZLD6</accession>
<evidence type="ECO:0000255" key="1">
    <source>
        <dbReference type="HAMAP-Rule" id="MF_01879"/>
    </source>
</evidence>
<gene>
    <name evidence="1" type="primary">dtpB</name>
    <name type="ordered locus">STM3592</name>
</gene>
<reference key="1">
    <citation type="journal article" date="2001" name="Nature">
        <title>Complete genome sequence of Salmonella enterica serovar Typhimurium LT2.</title>
        <authorList>
            <person name="McClelland M."/>
            <person name="Sanderson K.E."/>
            <person name="Spieth J."/>
            <person name="Clifton S.W."/>
            <person name="Latreille P."/>
            <person name="Courtney L."/>
            <person name="Porwollik S."/>
            <person name="Ali J."/>
            <person name="Dante M."/>
            <person name="Du F."/>
            <person name="Hou S."/>
            <person name="Layman D."/>
            <person name="Leonard S."/>
            <person name="Nguyen C."/>
            <person name="Scott K."/>
            <person name="Holmes A."/>
            <person name="Grewal N."/>
            <person name="Mulvaney E."/>
            <person name="Ryan E."/>
            <person name="Sun H."/>
            <person name="Florea L."/>
            <person name="Miller W."/>
            <person name="Stoneking T."/>
            <person name="Nhan M."/>
            <person name="Waterston R."/>
            <person name="Wilson R.K."/>
        </authorList>
    </citation>
    <scope>NUCLEOTIDE SEQUENCE [LARGE SCALE GENOMIC DNA]</scope>
    <source>
        <strain>LT2 / SGSC1412 / ATCC 700720</strain>
    </source>
</reference>
<keyword id="KW-0997">Cell inner membrane</keyword>
<keyword id="KW-1003">Cell membrane</keyword>
<keyword id="KW-0472">Membrane</keyword>
<keyword id="KW-0571">Peptide transport</keyword>
<keyword id="KW-0653">Protein transport</keyword>
<keyword id="KW-1185">Reference proteome</keyword>
<keyword id="KW-0812">Transmembrane</keyword>
<keyword id="KW-1133">Transmembrane helix</keyword>
<keyword id="KW-0813">Transport</keyword>
<comment type="function">
    <text evidence="1">Proton-dependent permease that transports di- and tripeptides.</text>
</comment>
<comment type="subcellular location">
    <subcellularLocation>
        <location evidence="1">Cell inner membrane</location>
        <topology evidence="1">Multi-pass membrane protein</topology>
    </subcellularLocation>
</comment>
<comment type="similarity">
    <text evidence="1">Belongs to the major facilitator superfamily. Proton-dependent oligopeptide transporter (POT/PTR) (TC 2.A.17) family. DtpB subfamily.</text>
</comment>
<dbReference type="EMBL" id="AE006468">
    <property type="protein sequence ID" value="AAL22452.1"/>
    <property type="molecule type" value="Genomic_DNA"/>
</dbReference>
<dbReference type="RefSeq" id="WP_001098277.1">
    <property type="nucleotide sequence ID" value="NC_003197.2"/>
</dbReference>
<dbReference type="SMR" id="Q8ZLD6"/>
<dbReference type="STRING" id="99287.STM3592"/>
<dbReference type="PaxDb" id="99287-STM3592"/>
<dbReference type="KEGG" id="stm:STM3592"/>
<dbReference type="PATRIC" id="fig|99287.12.peg.3796"/>
<dbReference type="HOGENOM" id="CLU_004790_0_0_6"/>
<dbReference type="PhylomeDB" id="Q8ZLD6"/>
<dbReference type="BioCyc" id="SENT99287:STM3592-MONOMER"/>
<dbReference type="Proteomes" id="UP000001014">
    <property type="component" value="Chromosome"/>
</dbReference>
<dbReference type="GO" id="GO:0005886">
    <property type="term" value="C:plasma membrane"/>
    <property type="evidence" value="ECO:0000318"/>
    <property type="project" value="GO_Central"/>
</dbReference>
<dbReference type="GO" id="GO:0071916">
    <property type="term" value="F:dipeptide transmembrane transporter activity"/>
    <property type="evidence" value="ECO:0000318"/>
    <property type="project" value="GO_Central"/>
</dbReference>
<dbReference type="GO" id="GO:0015333">
    <property type="term" value="F:peptide:proton symporter activity"/>
    <property type="evidence" value="ECO:0000318"/>
    <property type="project" value="GO_Central"/>
</dbReference>
<dbReference type="GO" id="GO:0042937">
    <property type="term" value="F:tripeptide transmembrane transporter activity"/>
    <property type="evidence" value="ECO:0000318"/>
    <property type="project" value="GO_Central"/>
</dbReference>
<dbReference type="GO" id="GO:0035442">
    <property type="term" value="P:dipeptide transmembrane transport"/>
    <property type="evidence" value="ECO:0000318"/>
    <property type="project" value="GO_Central"/>
</dbReference>
<dbReference type="GO" id="GO:0015031">
    <property type="term" value="P:protein transport"/>
    <property type="evidence" value="ECO:0007669"/>
    <property type="project" value="UniProtKB-KW"/>
</dbReference>
<dbReference type="CDD" id="cd17346">
    <property type="entry name" value="MFS_DtpA_like"/>
    <property type="match status" value="1"/>
</dbReference>
<dbReference type="FunFam" id="1.20.1250.20:FF:000017">
    <property type="entry name" value="Dipeptide and tripeptide permease A"/>
    <property type="match status" value="1"/>
</dbReference>
<dbReference type="Gene3D" id="1.20.1250.20">
    <property type="entry name" value="MFS general substrate transporter like domains"/>
    <property type="match status" value="1"/>
</dbReference>
<dbReference type="HAMAP" id="MF_01879">
    <property type="entry name" value="PTR2_DtpB_subfam"/>
    <property type="match status" value="1"/>
</dbReference>
<dbReference type="InterPro" id="IPR023778">
    <property type="entry name" value="AA/pep_transptr_DtpB"/>
</dbReference>
<dbReference type="InterPro" id="IPR005279">
    <property type="entry name" value="Dipep/tripep_permease"/>
</dbReference>
<dbReference type="InterPro" id="IPR036259">
    <property type="entry name" value="MFS_trans_sf"/>
</dbReference>
<dbReference type="InterPro" id="IPR050171">
    <property type="entry name" value="MFS_Transporters"/>
</dbReference>
<dbReference type="InterPro" id="IPR000109">
    <property type="entry name" value="POT_fam"/>
</dbReference>
<dbReference type="InterPro" id="IPR018456">
    <property type="entry name" value="PTR2_symporter_CS"/>
</dbReference>
<dbReference type="NCBIfam" id="NF007575">
    <property type="entry name" value="PRK10207.1"/>
    <property type="match status" value="1"/>
</dbReference>
<dbReference type="NCBIfam" id="TIGR00924">
    <property type="entry name" value="yjdL_sub1_fam"/>
    <property type="match status" value="1"/>
</dbReference>
<dbReference type="PANTHER" id="PTHR23517:SF15">
    <property type="entry name" value="PROTON-DEPENDENT OLIGOPEPTIDE FAMILY TRANSPORT PROTEIN"/>
    <property type="match status" value="1"/>
</dbReference>
<dbReference type="PANTHER" id="PTHR23517">
    <property type="entry name" value="RESISTANCE PROTEIN MDTM, PUTATIVE-RELATED-RELATED"/>
    <property type="match status" value="1"/>
</dbReference>
<dbReference type="Pfam" id="PF00854">
    <property type="entry name" value="PTR2"/>
    <property type="match status" value="1"/>
</dbReference>
<dbReference type="SUPFAM" id="SSF103473">
    <property type="entry name" value="MFS general substrate transporter"/>
    <property type="match status" value="2"/>
</dbReference>
<dbReference type="PROSITE" id="PS01023">
    <property type="entry name" value="PTR2_2"/>
    <property type="match status" value="1"/>
</dbReference>
<organism>
    <name type="scientific">Salmonella typhimurium (strain LT2 / SGSC1412 / ATCC 700720)</name>
    <dbReference type="NCBI Taxonomy" id="99287"/>
    <lineage>
        <taxon>Bacteria</taxon>
        <taxon>Pseudomonadati</taxon>
        <taxon>Pseudomonadota</taxon>
        <taxon>Gammaproteobacteria</taxon>
        <taxon>Enterobacterales</taxon>
        <taxon>Enterobacteriaceae</taxon>
        <taxon>Salmonella</taxon>
    </lineage>
</organism>